<sequence>MMDLDNIPDTQTEAEELEEVVMGLIINSGQARSLAYAALKQAKQGDFAAAKAMMDQSRMALNEAHLVQTKLIEGDAGEGKMKVSLVLVHAQDHLMTSMLARELITELIELHEKLKA</sequence>
<proteinExistence type="inferred from homology"/>
<name>PTQA_ECOL6</name>
<organism>
    <name type="scientific">Escherichia coli O6:H1 (strain CFT073 / ATCC 700928 / UPEC)</name>
    <dbReference type="NCBI Taxonomy" id="199310"/>
    <lineage>
        <taxon>Bacteria</taxon>
        <taxon>Pseudomonadati</taxon>
        <taxon>Pseudomonadota</taxon>
        <taxon>Gammaproteobacteria</taxon>
        <taxon>Enterobacterales</taxon>
        <taxon>Enterobacteriaceae</taxon>
        <taxon>Escherichia</taxon>
    </lineage>
</organism>
<accession>P69792</accession>
<accession>P17335</accession>
<accession>Q47092</accession>
<accession>Q47093</accession>
<accession>Q47094</accession>
<accession>Q57128</accession>
<reference key="1">
    <citation type="journal article" date="2002" name="Proc. Natl. Acad. Sci. U.S.A.">
        <title>Extensive mosaic structure revealed by the complete genome sequence of uropathogenic Escherichia coli.</title>
        <authorList>
            <person name="Welch R.A."/>
            <person name="Burland V."/>
            <person name="Plunkett G. III"/>
            <person name="Redford P."/>
            <person name="Roesch P."/>
            <person name="Rasko D."/>
            <person name="Buckles E.L."/>
            <person name="Liou S.-R."/>
            <person name="Boutin A."/>
            <person name="Hackett J."/>
            <person name="Stroud D."/>
            <person name="Mayhew G.F."/>
            <person name="Rose D.J."/>
            <person name="Zhou S."/>
            <person name="Schwartz D.C."/>
            <person name="Perna N.T."/>
            <person name="Mobley H.L.T."/>
            <person name="Donnenberg M.S."/>
            <person name="Blattner F.R."/>
        </authorList>
    </citation>
    <scope>NUCLEOTIDE SEQUENCE [LARGE SCALE GENOMIC DNA]</scope>
    <source>
        <strain>CFT073 / ATCC 700928 / UPEC</strain>
    </source>
</reference>
<keyword id="KW-0963">Cytoplasm</keyword>
<keyword id="KW-0597">Phosphoprotein</keyword>
<keyword id="KW-0598">Phosphotransferase system</keyword>
<keyword id="KW-1185">Reference proteome</keyword>
<keyword id="KW-0762">Sugar transport</keyword>
<keyword id="KW-0808">Transferase</keyword>
<keyword id="KW-0813">Transport</keyword>
<evidence type="ECO:0000250" key="1">
    <source>
        <dbReference type="UniProtKB" id="P69791"/>
    </source>
</evidence>
<evidence type="ECO:0000255" key="2">
    <source>
        <dbReference type="PROSITE-ProRule" id="PRU00418"/>
    </source>
</evidence>
<evidence type="ECO:0000305" key="3"/>
<feature type="chain" id="PRO_0000186495" description="PTS system N,N'-diacetylchitobiose-specific EIIA component">
    <location>
        <begin position="1"/>
        <end position="116"/>
    </location>
</feature>
<feature type="domain" description="PTS EIIA type-3" evidence="2">
    <location>
        <begin position="15"/>
        <end position="113"/>
    </location>
</feature>
<feature type="active site" description="Tele-phosphohistidine intermediate" evidence="1">
    <location>
        <position position="89"/>
    </location>
</feature>
<feature type="modified residue" description="Phosphohistidine; by HPr" evidence="2">
    <location>
        <position position="89"/>
    </location>
</feature>
<dbReference type="EMBL" id="AE014075">
    <property type="protein sequence ID" value="AAN80594.1"/>
    <property type="molecule type" value="Genomic_DNA"/>
</dbReference>
<dbReference type="RefSeq" id="WP_000968919.1">
    <property type="nucleotide sequence ID" value="NZ_CP051263.1"/>
</dbReference>
<dbReference type="BMRB" id="P69792"/>
<dbReference type="SMR" id="P69792"/>
<dbReference type="STRING" id="199310.c2135"/>
<dbReference type="GeneID" id="93775949"/>
<dbReference type="KEGG" id="ecc:c2135"/>
<dbReference type="eggNOG" id="COG1447">
    <property type="taxonomic scope" value="Bacteria"/>
</dbReference>
<dbReference type="HOGENOM" id="CLU_152490_3_0_6"/>
<dbReference type="BioCyc" id="ECOL199310:C2135-MONOMER"/>
<dbReference type="Proteomes" id="UP000001410">
    <property type="component" value="Chromosome"/>
</dbReference>
<dbReference type="GO" id="GO:0005737">
    <property type="term" value="C:cytoplasm"/>
    <property type="evidence" value="ECO:0007669"/>
    <property type="project" value="UniProtKB-SubCell"/>
</dbReference>
<dbReference type="GO" id="GO:0016740">
    <property type="term" value="F:transferase activity"/>
    <property type="evidence" value="ECO:0007669"/>
    <property type="project" value="UniProtKB-KW"/>
</dbReference>
<dbReference type="GO" id="GO:0009401">
    <property type="term" value="P:phosphoenolpyruvate-dependent sugar phosphotransferase system"/>
    <property type="evidence" value="ECO:0007669"/>
    <property type="project" value="UniProtKB-KW"/>
</dbReference>
<dbReference type="CDD" id="cd00215">
    <property type="entry name" value="PTS_IIA_lac"/>
    <property type="match status" value="1"/>
</dbReference>
<dbReference type="FunFam" id="1.20.58.80:FF:000001">
    <property type="entry name" value="PTS system, lactose-specific IIa component"/>
    <property type="match status" value="1"/>
</dbReference>
<dbReference type="Gene3D" id="1.20.58.80">
    <property type="entry name" value="Phosphotransferase system, lactose/cellobiose-type IIA subunit"/>
    <property type="match status" value="1"/>
</dbReference>
<dbReference type="InterPro" id="IPR003188">
    <property type="entry name" value="PTS_IIA_lac/cel"/>
</dbReference>
<dbReference type="InterPro" id="IPR036542">
    <property type="entry name" value="PTS_IIA_lac/cel_sf"/>
</dbReference>
<dbReference type="NCBIfam" id="TIGR00823">
    <property type="entry name" value="EIIA-LAC"/>
    <property type="match status" value="1"/>
</dbReference>
<dbReference type="NCBIfam" id="NF007768">
    <property type="entry name" value="PRK10454.1"/>
    <property type="match status" value="1"/>
</dbReference>
<dbReference type="PANTHER" id="PTHR34382">
    <property type="entry name" value="PTS SYSTEM N,N'-DIACETYLCHITOBIOSE-SPECIFIC EIIA COMPONENT"/>
    <property type="match status" value="1"/>
</dbReference>
<dbReference type="PANTHER" id="PTHR34382:SF7">
    <property type="entry name" value="PTS SYSTEM N,N'-DIACETYLCHITOBIOSE-SPECIFIC EIIA COMPONENT"/>
    <property type="match status" value="1"/>
</dbReference>
<dbReference type="Pfam" id="PF02255">
    <property type="entry name" value="PTS_IIA"/>
    <property type="match status" value="1"/>
</dbReference>
<dbReference type="PIRSF" id="PIRSF000699">
    <property type="entry name" value="PTS_IILac_III"/>
    <property type="match status" value="1"/>
</dbReference>
<dbReference type="SUPFAM" id="SSF46973">
    <property type="entry name" value="Enzyme IIa from lactose specific PTS, IIa-lac"/>
    <property type="match status" value="1"/>
</dbReference>
<dbReference type="PROSITE" id="PS51095">
    <property type="entry name" value="PTS_EIIA_TYPE_3"/>
    <property type="match status" value="1"/>
</dbReference>
<comment type="function">
    <text evidence="1">The phosphoenolpyruvate-dependent sugar phosphotransferase system (sugar PTS), a major carbohydrate active transport system, catalyzes the phosphorylation of incoming sugar substrates concomitantly with their translocation across the cell membrane. The enzyme II ChbABC PTS system is involved in the transport of the chitin disaccharide N,N'-diacetylchitobiose (GlcNAc2).</text>
</comment>
<comment type="cofactor">
    <cofactor evidence="1">
        <name>Mg(2+)</name>
        <dbReference type="ChEBI" id="CHEBI:18420"/>
    </cofactor>
    <text evidence="1">Can also use copper and nickel with lower efficiency.</text>
</comment>
<comment type="subunit">
    <text evidence="1">Forms a complex with ChbB (EIIB). ChbA is a homotrimer.</text>
</comment>
<comment type="subcellular location">
    <subcellularLocation>
        <location evidence="3">Cytoplasm</location>
    </subcellularLocation>
</comment>
<comment type="induction">
    <text evidence="1">By GlcNAc2, GlcNAc3 and beta-N,N'-diacetylchitobiose (Me-TCB).</text>
</comment>
<comment type="domain">
    <text evidence="2">The PTS EIIA type-3 domain is phosphorylated by phospho-HPr on a histidyl residue. Then, it transfers the phosphoryl group to the PTS EIIB type-3 domain.</text>
</comment>
<gene>
    <name type="primary">chbA</name>
    <name type="synonym">celC</name>
    <name type="ordered locus">c2135</name>
</gene>
<protein>
    <recommendedName>
        <fullName evidence="1">PTS system N,N'-diacetylchitobiose-specific EIIA component</fullName>
    </recommendedName>
    <alternativeName>
        <fullName evidence="1">EIIA-Chb</fullName>
    </alternativeName>
    <alternativeName>
        <fullName evidence="1">EIII-Chb</fullName>
    </alternativeName>
    <alternativeName>
        <fullName evidence="1">IIIcel</fullName>
    </alternativeName>
    <alternativeName>
        <fullName evidence="1">N,N'-diacetylchitobiose-specific phosphotransferase enzyme IIA component</fullName>
    </alternativeName>
</protein>